<accession>Q4FUD2</accession>
<gene>
    <name evidence="1" type="primary">rpsD</name>
    <name type="ordered locus">Psyc_0513</name>
</gene>
<protein>
    <recommendedName>
        <fullName evidence="1">Small ribosomal subunit protein uS4</fullName>
    </recommendedName>
    <alternativeName>
        <fullName evidence="3">30S ribosomal protein S4</fullName>
    </alternativeName>
</protein>
<name>RS4_PSYA2</name>
<keyword id="KW-1185">Reference proteome</keyword>
<keyword id="KW-0687">Ribonucleoprotein</keyword>
<keyword id="KW-0689">Ribosomal protein</keyword>
<keyword id="KW-0694">RNA-binding</keyword>
<keyword id="KW-0699">rRNA-binding</keyword>
<reference key="1">
    <citation type="journal article" date="2010" name="Appl. Environ. Microbiol.">
        <title>The genome sequence of Psychrobacter arcticus 273-4, a psychroactive Siberian permafrost bacterium, reveals mechanisms for adaptation to low-temperature growth.</title>
        <authorList>
            <person name="Ayala-del-Rio H.L."/>
            <person name="Chain P.S."/>
            <person name="Grzymski J.J."/>
            <person name="Ponder M.A."/>
            <person name="Ivanova N."/>
            <person name="Bergholz P.W."/>
            <person name="Di Bartolo G."/>
            <person name="Hauser L."/>
            <person name="Land M."/>
            <person name="Bakermans C."/>
            <person name="Rodrigues D."/>
            <person name="Klappenbach J."/>
            <person name="Zarka D."/>
            <person name="Larimer F."/>
            <person name="Richardson P."/>
            <person name="Murray A."/>
            <person name="Thomashow M."/>
            <person name="Tiedje J.M."/>
        </authorList>
    </citation>
    <scope>NUCLEOTIDE SEQUENCE [LARGE SCALE GENOMIC DNA]</scope>
    <source>
        <strain>DSM 17307 / VKM B-2377 / 273-4</strain>
    </source>
</reference>
<proteinExistence type="inferred from homology"/>
<feature type="chain" id="PRO_0000228918" description="Small ribosomal subunit protein uS4">
    <location>
        <begin position="1"/>
        <end position="213"/>
    </location>
</feature>
<feature type="domain" description="S4 RNA-binding" evidence="1">
    <location>
        <begin position="97"/>
        <end position="163"/>
    </location>
</feature>
<feature type="region of interest" description="Disordered" evidence="2">
    <location>
        <begin position="16"/>
        <end position="53"/>
    </location>
</feature>
<feature type="compositionally biased region" description="Polar residues" evidence="2">
    <location>
        <begin position="44"/>
        <end position="53"/>
    </location>
</feature>
<evidence type="ECO:0000255" key="1">
    <source>
        <dbReference type="HAMAP-Rule" id="MF_01306"/>
    </source>
</evidence>
<evidence type="ECO:0000256" key="2">
    <source>
        <dbReference type="SAM" id="MobiDB-lite"/>
    </source>
</evidence>
<evidence type="ECO:0000305" key="3"/>
<sequence>MARYIGPKLKLSRREGTDLGLKSGVKPYDVKTKKSARPPGQHGVSRNKSSEYSLQLREKQKVKRIYGVLERQFANYYKEAARKRGATGENLLAMLESRLDNVVYRMGFGSTRAEARQLVSHRTVMVKKAGRDEFVRVNIPSIQLQDGDVIAIQEKSREQLRIKNAIELATQRGIPEWLDVDHSKLQGTFKKAPDRIDLPAEINESLIVELYSK</sequence>
<comment type="function">
    <text evidence="1">One of the primary rRNA binding proteins, it binds directly to 16S rRNA where it nucleates assembly of the body of the 30S subunit.</text>
</comment>
<comment type="function">
    <text evidence="1">With S5 and S12 plays an important role in translational accuracy.</text>
</comment>
<comment type="subunit">
    <text evidence="1">Part of the 30S ribosomal subunit. Contacts protein S5. The interaction surface between S4 and S5 is involved in control of translational fidelity.</text>
</comment>
<comment type="similarity">
    <text evidence="1">Belongs to the universal ribosomal protein uS4 family.</text>
</comment>
<organism>
    <name type="scientific">Psychrobacter arcticus (strain DSM 17307 / VKM B-2377 / 273-4)</name>
    <dbReference type="NCBI Taxonomy" id="259536"/>
    <lineage>
        <taxon>Bacteria</taxon>
        <taxon>Pseudomonadati</taxon>
        <taxon>Pseudomonadota</taxon>
        <taxon>Gammaproteobacteria</taxon>
        <taxon>Moraxellales</taxon>
        <taxon>Moraxellaceae</taxon>
        <taxon>Psychrobacter</taxon>
    </lineage>
</organism>
<dbReference type="EMBL" id="CP000082">
    <property type="protein sequence ID" value="AAZ18376.1"/>
    <property type="molecule type" value="Genomic_DNA"/>
</dbReference>
<dbReference type="RefSeq" id="WP_011279807.1">
    <property type="nucleotide sequence ID" value="NC_007204.1"/>
</dbReference>
<dbReference type="SMR" id="Q4FUD2"/>
<dbReference type="STRING" id="259536.Psyc_0513"/>
<dbReference type="KEGG" id="par:Psyc_0513"/>
<dbReference type="eggNOG" id="COG0522">
    <property type="taxonomic scope" value="Bacteria"/>
</dbReference>
<dbReference type="HOGENOM" id="CLU_092403_0_2_6"/>
<dbReference type="OrthoDB" id="9803672at2"/>
<dbReference type="Proteomes" id="UP000000546">
    <property type="component" value="Chromosome"/>
</dbReference>
<dbReference type="GO" id="GO:0015935">
    <property type="term" value="C:small ribosomal subunit"/>
    <property type="evidence" value="ECO:0007669"/>
    <property type="project" value="InterPro"/>
</dbReference>
<dbReference type="GO" id="GO:0019843">
    <property type="term" value="F:rRNA binding"/>
    <property type="evidence" value="ECO:0007669"/>
    <property type="project" value="UniProtKB-UniRule"/>
</dbReference>
<dbReference type="GO" id="GO:0003735">
    <property type="term" value="F:structural constituent of ribosome"/>
    <property type="evidence" value="ECO:0007669"/>
    <property type="project" value="InterPro"/>
</dbReference>
<dbReference type="GO" id="GO:0042274">
    <property type="term" value="P:ribosomal small subunit biogenesis"/>
    <property type="evidence" value="ECO:0007669"/>
    <property type="project" value="TreeGrafter"/>
</dbReference>
<dbReference type="GO" id="GO:0006412">
    <property type="term" value="P:translation"/>
    <property type="evidence" value="ECO:0007669"/>
    <property type="project" value="UniProtKB-UniRule"/>
</dbReference>
<dbReference type="CDD" id="cd00165">
    <property type="entry name" value="S4"/>
    <property type="match status" value="1"/>
</dbReference>
<dbReference type="FunFam" id="1.10.1050.10:FF:000001">
    <property type="entry name" value="30S ribosomal protein S4"/>
    <property type="match status" value="1"/>
</dbReference>
<dbReference type="FunFam" id="3.10.290.10:FF:000001">
    <property type="entry name" value="30S ribosomal protein S4"/>
    <property type="match status" value="1"/>
</dbReference>
<dbReference type="Gene3D" id="1.10.1050.10">
    <property type="entry name" value="Ribosomal Protein S4 Delta 41, Chain A, domain 1"/>
    <property type="match status" value="1"/>
</dbReference>
<dbReference type="Gene3D" id="3.10.290.10">
    <property type="entry name" value="RNA-binding S4 domain"/>
    <property type="match status" value="1"/>
</dbReference>
<dbReference type="HAMAP" id="MF_01306_B">
    <property type="entry name" value="Ribosomal_uS4_B"/>
    <property type="match status" value="1"/>
</dbReference>
<dbReference type="InterPro" id="IPR022801">
    <property type="entry name" value="Ribosomal_uS4"/>
</dbReference>
<dbReference type="InterPro" id="IPR005709">
    <property type="entry name" value="Ribosomal_uS4_bac-type"/>
</dbReference>
<dbReference type="InterPro" id="IPR018079">
    <property type="entry name" value="Ribosomal_uS4_CS"/>
</dbReference>
<dbReference type="InterPro" id="IPR001912">
    <property type="entry name" value="Ribosomal_uS4_N"/>
</dbReference>
<dbReference type="InterPro" id="IPR002942">
    <property type="entry name" value="S4_RNA-bd"/>
</dbReference>
<dbReference type="InterPro" id="IPR036986">
    <property type="entry name" value="S4_RNA-bd_sf"/>
</dbReference>
<dbReference type="NCBIfam" id="NF003717">
    <property type="entry name" value="PRK05327.1"/>
    <property type="match status" value="1"/>
</dbReference>
<dbReference type="NCBIfam" id="TIGR01017">
    <property type="entry name" value="rpsD_bact"/>
    <property type="match status" value="1"/>
</dbReference>
<dbReference type="PANTHER" id="PTHR11831">
    <property type="entry name" value="30S 40S RIBOSOMAL PROTEIN"/>
    <property type="match status" value="1"/>
</dbReference>
<dbReference type="PANTHER" id="PTHR11831:SF4">
    <property type="entry name" value="SMALL RIBOSOMAL SUBUNIT PROTEIN US4M"/>
    <property type="match status" value="1"/>
</dbReference>
<dbReference type="Pfam" id="PF00163">
    <property type="entry name" value="Ribosomal_S4"/>
    <property type="match status" value="1"/>
</dbReference>
<dbReference type="Pfam" id="PF01479">
    <property type="entry name" value="S4"/>
    <property type="match status" value="1"/>
</dbReference>
<dbReference type="SMART" id="SM01390">
    <property type="entry name" value="Ribosomal_S4"/>
    <property type="match status" value="1"/>
</dbReference>
<dbReference type="SMART" id="SM00363">
    <property type="entry name" value="S4"/>
    <property type="match status" value="1"/>
</dbReference>
<dbReference type="SUPFAM" id="SSF55174">
    <property type="entry name" value="Alpha-L RNA-binding motif"/>
    <property type="match status" value="1"/>
</dbReference>
<dbReference type="PROSITE" id="PS00632">
    <property type="entry name" value="RIBOSOMAL_S4"/>
    <property type="match status" value="1"/>
</dbReference>
<dbReference type="PROSITE" id="PS50889">
    <property type="entry name" value="S4"/>
    <property type="match status" value="1"/>
</dbReference>